<sequence>MADGNEDLRADDLPGPAFESYESMELACPAERSGHVAVSDGRHMFVWGGYKSNQVRGLYDFYLPREELWIYNMETGRWKKINTEGDVPPSMSGSCAVCVDRVLYLFGGHHSRGNTNKFYMLDSRSTDRVLQWERIDCQGIPPSSKDKLGVWVYKNKLIFFGGYGYLPEDKVLGTFEFDETSFWNSSHPRGWNDHVHILDTETFTWSQPITTGKAPSPRAAHACATVGNRGFVFGGRYRDARMNDLHYLNLDTWEWNELIPQGICPVGRSWHSLTPVSSDHLFLFGGFTTDKQPLSDAWTYCISKNEWIQFNHPYTEKPRLWHTACASDEGEVIVFGGCANNLLVHHRAAHSNEILIFSVQPKSLVRLSLEAVICFKEMLANSWNCLPKHLLHSVNQRFGSNNTSGS</sequence>
<accession>Q9Y2U9</accession>
<accession>B3KPF9</accession>
<accession>Q6IAF0</accession>
<accession>Q86TY9</accession>
<name>KLDC2_HUMAN</name>
<protein>
    <recommendedName>
        <fullName evidence="13">Kelch domain-containing protein 2</fullName>
    </recommendedName>
    <alternativeName>
        <fullName evidence="10">Hepatocellular carcinoma-associated antigen 33</fullName>
    </alternativeName>
    <alternativeName>
        <fullName evidence="9">Host cell factor homolog LCP</fullName>
    </alternativeName>
    <alternativeName>
        <fullName evidence="9">Host cell factor-like protein 1</fullName>
        <shortName evidence="9">HCLP-1</shortName>
    </alternativeName>
</protein>
<keyword id="KW-0002">3D-structure</keyword>
<keyword id="KW-0025">Alternative splicing</keyword>
<keyword id="KW-0880">Kelch repeat</keyword>
<keyword id="KW-0539">Nucleus</keyword>
<keyword id="KW-1267">Proteomics identification</keyword>
<keyword id="KW-1185">Reference proteome</keyword>
<keyword id="KW-0677">Repeat</keyword>
<keyword id="KW-0832">Ubl conjugation</keyword>
<keyword id="KW-0833">Ubl conjugation pathway</keyword>
<proteinExistence type="evidence at protein level"/>
<organism>
    <name type="scientific">Homo sapiens</name>
    <name type="common">Human</name>
    <dbReference type="NCBI Taxonomy" id="9606"/>
    <lineage>
        <taxon>Eukaryota</taxon>
        <taxon>Metazoa</taxon>
        <taxon>Chordata</taxon>
        <taxon>Craniata</taxon>
        <taxon>Vertebrata</taxon>
        <taxon>Euteleostomi</taxon>
        <taxon>Mammalia</taxon>
        <taxon>Eutheria</taxon>
        <taxon>Euarchontoglires</taxon>
        <taxon>Primates</taxon>
        <taxon>Haplorrhini</taxon>
        <taxon>Catarrhini</taxon>
        <taxon>Hominidae</taxon>
        <taxon>Homo</taxon>
    </lineage>
</organism>
<reference key="1">
    <citation type="journal article" date="2001" name="J. Biol. Chem.">
        <title>Inhibition of LZIP-mediated transcription through direct interaction with a novel host cell factor-like protein.</title>
        <authorList>
            <person name="Zhou H.-J."/>
            <person name="Wong C.-M."/>
            <person name="Chen J.-H."/>
            <person name="Qiang B.-Q."/>
            <person name="Yuan J.-G."/>
            <person name="Jin D.-Y."/>
        </authorList>
    </citation>
    <scope>NUCLEOTIDE SEQUENCE [MRNA] (ISOFORM 1)</scope>
    <scope>FUNCTION</scope>
    <scope>INTERACTION WITH CREB3</scope>
    <scope>SUBCELLULAR LOCATION</scope>
    <scope>TISSUE SPECIFICITY</scope>
</reference>
<reference key="2">
    <citation type="journal article" date="2002" name="J. Immunol.">
        <title>Large scale identification of human hepatocellular carcinoma-associated antigens by autoantibodies.</title>
        <authorList>
            <person name="Wang Y."/>
            <person name="Han K.-J."/>
            <person name="Pang X.-W."/>
            <person name="Vaughan H.A."/>
            <person name="Qu W."/>
            <person name="Dong X.-Y."/>
            <person name="Peng J.-R."/>
            <person name="Zhao H.-T."/>
            <person name="Rui J.-A."/>
            <person name="Leng X.-S."/>
            <person name="Cebon J."/>
            <person name="Burgess A.W."/>
            <person name="Chen W.-F."/>
        </authorList>
    </citation>
    <scope>NUCLEOTIDE SEQUENCE [MRNA] (ISOFORM 1)</scope>
    <source>
        <tissue>Hepatoma</tissue>
    </source>
</reference>
<reference key="3">
    <citation type="submission" date="2003-01" db="EMBL/GenBank/DDBJ databases">
        <title>Full-length cDNA libraries and normalization.</title>
        <authorList>
            <person name="Li W.B."/>
            <person name="Gruber C."/>
            <person name="Jessee J."/>
            <person name="Polayes D."/>
        </authorList>
    </citation>
    <scope>NUCLEOTIDE SEQUENCE [LARGE SCALE MRNA] (ISOFORM 2)</scope>
    <source>
        <tissue>Placenta</tissue>
    </source>
</reference>
<reference key="4">
    <citation type="journal article" date="2004" name="Nat. Genet.">
        <title>Complete sequencing and characterization of 21,243 full-length human cDNAs.</title>
        <authorList>
            <person name="Ota T."/>
            <person name="Suzuki Y."/>
            <person name="Nishikawa T."/>
            <person name="Otsuki T."/>
            <person name="Sugiyama T."/>
            <person name="Irie R."/>
            <person name="Wakamatsu A."/>
            <person name="Hayashi K."/>
            <person name="Sato H."/>
            <person name="Nagai K."/>
            <person name="Kimura K."/>
            <person name="Makita H."/>
            <person name="Sekine M."/>
            <person name="Obayashi M."/>
            <person name="Nishi T."/>
            <person name="Shibahara T."/>
            <person name="Tanaka T."/>
            <person name="Ishii S."/>
            <person name="Yamamoto J."/>
            <person name="Saito K."/>
            <person name="Kawai Y."/>
            <person name="Isono Y."/>
            <person name="Nakamura Y."/>
            <person name="Nagahari K."/>
            <person name="Murakami K."/>
            <person name="Yasuda T."/>
            <person name="Iwayanagi T."/>
            <person name="Wagatsuma M."/>
            <person name="Shiratori A."/>
            <person name="Sudo H."/>
            <person name="Hosoiri T."/>
            <person name="Kaku Y."/>
            <person name="Kodaira H."/>
            <person name="Kondo H."/>
            <person name="Sugawara M."/>
            <person name="Takahashi M."/>
            <person name="Kanda K."/>
            <person name="Yokoi T."/>
            <person name="Furuya T."/>
            <person name="Kikkawa E."/>
            <person name="Omura Y."/>
            <person name="Abe K."/>
            <person name="Kamihara K."/>
            <person name="Katsuta N."/>
            <person name="Sato K."/>
            <person name="Tanikawa M."/>
            <person name="Yamazaki M."/>
            <person name="Ninomiya K."/>
            <person name="Ishibashi T."/>
            <person name="Yamashita H."/>
            <person name="Murakawa K."/>
            <person name="Fujimori K."/>
            <person name="Tanai H."/>
            <person name="Kimata M."/>
            <person name="Watanabe M."/>
            <person name="Hiraoka S."/>
            <person name="Chiba Y."/>
            <person name="Ishida S."/>
            <person name="Ono Y."/>
            <person name="Takiguchi S."/>
            <person name="Watanabe S."/>
            <person name="Yosida M."/>
            <person name="Hotuta T."/>
            <person name="Kusano J."/>
            <person name="Kanehori K."/>
            <person name="Takahashi-Fujii A."/>
            <person name="Hara H."/>
            <person name="Tanase T.-O."/>
            <person name="Nomura Y."/>
            <person name="Togiya S."/>
            <person name="Komai F."/>
            <person name="Hara R."/>
            <person name="Takeuchi K."/>
            <person name="Arita M."/>
            <person name="Imose N."/>
            <person name="Musashino K."/>
            <person name="Yuuki H."/>
            <person name="Oshima A."/>
            <person name="Sasaki N."/>
            <person name="Aotsuka S."/>
            <person name="Yoshikawa Y."/>
            <person name="Matsunawa H."/>
            <person name="Ichihara T."/>
            <person name="Shiohata N."/>
            <person name="Sano S."/>
            <person name="Moriya S."/>
            <person name="Momiyama H."/>
            <person name="Satoh N."/>
            <person name="Takami S."/>
            <person name="Terashima Y."/>
            <person name="Suzuki O."/>
            <person name="Nakagawa S."/>
            <person name="Senoh A."/>
            <person name="Mizoguchi H."/>
            <person name="Goto Y."/>
            <person name="Shimizu F."/>
            <person name="Wakebe H."/>
            <person name="Hishigaki H."/>
            <person name="Watanabe T."/>
            <person name="Sugiyama A."/>
            <person name="Takemoto M."/>
            <person name="Kawakami B."/>
            <person name="Yamazaki M."/>
            <person name="Watanabe K."/>
            <person name="Kumagai A."/>
            <person name="Itakura S."/>
            <person name="Fukuzumi Y."/>
            <person name="Fujimori Y."/>
            <person name="Komiyama M."/>
            <person name="Tashiro H."/>
            <person name="Tanigami A."/>
            <person name="Fujiwara T."/>
            <person name="Ono T."/>
            <person name="Yamada K."/>
            <person name="Fujii Y."/>
            <person name="Ozaki K."/>
            <person name="Hirao M."/>
            <person name="Ohmori Y."/>
            <person name="Kawabata A."/>
            <person name="Hikiji T."/>
            <person name="Kobatake N."/>
            <person name="Inagaki H."/>
            <person name="Ikema Y."/>
            <person name="Okamoto S."/>
            <person name="Okitani R."/>
            <person name="Kawakami T."/>
            <person name="Noguchi S."/>
            <person name="Itoh T."/>
            <person name="Shigeta K."/>
            <person name="Senba T."/>
            <person name="Matsumura K."/>
            <person name="Nakajima Y."/>
            <person name="Mizuno T."/>
            <person name="Morinaga M."/>
            <person name="Sasaki M."/>
            <person name="Togashi T."/>
            <person name="Oyama M."/>
            <person name="Hata H."/>
            <person name="Watanabe M."/>
            <person name="Komatsu T."/>
            <person name="Mizushima-Sugano J."/>
            <person name="Satoh T."/>
            <person name="Shirai Y."/>
            <person name="Takahashi Y."/>
            <person name="Nakagawa K."/>
            <person name="Okumura K."/>
            <person name="Nagase T."/>
            <person name="Nomura N."/>
            <person name="Kikuchi H."/>
            <person name="Masuho Y."/>
            <person name="Yamashita R."/>
            <person name="Nakai K."/>
            <person name="Yada T."/>
            <person name="Nakamura Y."/>
            <person name="Ohara O."/>
            <person name="Isogai T."/>
            <person name="Sugano S."/>
        </authorList>
    </citation>
    <scope>NUCLEOTIDE SEQUENCE [LARGE SCALE MRNA] (ISOFORM 1)</scope>
    <source>
        <tissue>Ovarian carcinoma</tissue>
    </source>
</reference>
<reference key="5">
    <citation type="submission" date="2004-06" db="EMBL/GenBank/DDBJ databases">
        <title>Cloning of human full open reading frames in Gateway(TM) system entry vector (pDONR201).</title>
        <authorList>
            <person name="Ebert L."/>
            <person name="Schick M."/>
            <person name="Neubert P."/>
            <person name="Schatten R."/>
            <person name="Henze S."/>
            <person name="Korn B."/>
        </authorList>
    </citation>
    <scope>NUCLEOTIDE SEQUENCE [LARGE SCALE MRNA] (ISOFORM 1)</scope>
</reference>
<reference key="6">
    <citation type="submission" date="2005-09" db="EMBL/GenBank/DDBJ databases">
        <authorList>
            <person name="Mural R.J."/>
            <person name="Istrail S."/>
            <person name="Sutton G.G."/>
            <person name="Florea L."/>
            <person name="Halpern A.L."/>
            <person name="Mobarry C.M."/>
            <person name="Lippert R."/>
            <person name="Walenz B."/>
            <person name="Shatkay H."/>
            <person name="Dew I."/>
            <person name="Miller J.R."/>
            <person name="Flanigan M.J."/>
            <person name="Edwards N.J."/>
            <person name="Bolanos R."/>
            <person name="Fasulo D."/>
            <person name="Halldorsson B.V."/>
            <person name="Hannenhalli S."/>
            <person name="Turner R."/>
            <person name="Yooseph S."/>
            <person name="Lu F."/>
            <person name="Nusskern D.R."/>
            <person name="Shue B.C."/>
            <person name="Zheng X.H."/>
            <person name="Zhong F."/>
            <person name="Delcher A.L."/>
            <person name="Huson D.H."/>
            <person name="Kravitz S.A."/>
            <person name="Mouchard L."/>
            <person name="Reinert K."/>
            <person name="Remington K.A."/>
            <person name="Clark A.G."/>
            <person name="Waterman M.S."/>
            <person name="Eichler E.E."/>
            <person name="Adams M.D."/>
            <person name="Hunkapiller M.W."/>
            <person name="Myers E.W."/>
            <person name="Venter J.C."/>
        </authorList>
    </citation>
    <scope>NUCLEOTIDE SEQUENCE [LARGE SCALE GENOMIC DNA]</scope>
</reference>
<reference key="7">
    <citation type="journal article" date="2004" name="Genome Res.">
        <title>The status, quality, and expansion of the NIH full-length cDNA project: the Mammalian Gene Collection (MGC).</title>
        <authorList>
            <consortium name="The MGC Project Team"/>
        </authorList>
    </citation>
    <scope>NUCLEOTIDE SEQUENCE [LARGE SCALE MRNA] (ISOFORM 1)</scope>
    <source>
        <tissue>Brain</tissue>
        <tissue>Kidney</tissue>
    </source>
</reference>
<reference key="8">
    <citation type="journal article" date="2007" name="Mol. Cell. Biochem.">
        <title>Differential subcellular localization and activity of kelch repeat proteins KLHDC1 and KLHDC2.</title>
        <authorList>
            <person name="Chin K.-T."/>
            <person name="Xu H.-T."/>
            <person name="Ching Y.-P."/>
            <person name="Jin D.-Y."/>
        </authorList>
    </citation>
    <scope>SUBCELLULAR LOCATION</scope>
    <scope>TISSUE SPECIFICITY</scope>
</reference>
<reference key="9">
    <citation type="journal article" date="2011" name="BMC Syst. Biol.">
        <title>Initial characterization of the human central proteome.</title>
        <authorList>
            <person name="Burkard T.R."/>
            <person name="Planyavsky M."/>
            <person name="Kaupe I."/>
            <person name="Breitwieser F.P."/>
            <person name="Buerckstuemmer T."/>
            <person name="Bennett K.L."/>
            <person name="Superti-Furga G."/>
            <person name="Colinge J."/>
        </authorList>
    </citation>
    <scope>IDENTIFICATION BY MASS SPECTROMETRY [LARGE SCALE ANALYSIS]</scope>
</reference>
<reference key="10">
    <citation type="journal article" date="2015" name="Science">
        <title>SELENOPROTEINS. CRL2 aids elimination of truncated selenoproteins produced by failed UGA/Sec decoding.</title>
        <authorList>
            <person name="Lin H.C."/>
            <person name="Ho S.C."/>
            <person name="Chen Y.Y."/>
            <person name="Khoo K.H."/>
            <person name="Hsu P.H."/>
            <person name="Yen H.C."/>
        </authorList>
    </citation>
    <scope>FUNCTION</scope>
</reference>
<reference key="11">
    <citation type="journal article" date="2018" name="Cell">
        <title>The eukaryotic proteome is shaped by E3 ubiquitin ligases targeting C-terminal degrons.</title>
        <authorList>
            <person name="Koren I."/>
            <person name="Timms R.T."/>
            <person name="Kula T."/>
            <person name="Xu Q."/>
            <person name="Li M.Z."/>
            <person name="Elledge S.J."/>
        </authorList>
    </citation>
    <scope>FUNCTION</scope>
    <scope>PATHWAY</scope>
    <scope>IDENTIFICATION IN A CRL2 E3 UBIQUITIN-PROTEIN LIGASE COMPLEX</scope>
</reference>
<reference key="12">
    <citation type="journal article" date="2018" name="Mol. Cell">
        <title>C-terminal end-directed protein elimination by CRL2 ubiquitin ligases.</title>
        <authorList>
            <person name="Lin H.C."/>
            <person name="Yeh C.W."/>
            <person name="Chen Y.F."/>
            <person name="Lee T.T."/>
            <person name="Hsieh P.Y."/>
            <person name="Rusnac D.V."/>
            <person name="Lin S.Y."/>
            <person name="Elledge S.J."/>
            <person name="Zheng N."/>
            <person name="Yen H.S."/>
        </authorList>
    </citation>
    <scope>FUNCTION</scope>
    <scope>PATHWAY</scope>
    <scope>IDENTIFICATION IN A CRL2 E3 UBIQUITIN-PROTEIN LIGASE COMPLEX</scope>
</reference>
<reference evidence="15 16 17" key="13">
    <citation type="journal article" date="2018" name="Mol. Cell">
        <title>Recognition of the diglycine C-end degron by CRL2(KLHDC2) ubiquitin ligase.</title>
        <authorList>
            <person name="Rusnac D.V."/>
            <person name="Lin H.C."/>
            <person name="Canzani D."/>
            <person name="Tien K.X."/>
            <person name="Hinds T.R."/>
            <person name="Tsue A.F."/>
            <person name="Bush M.F."/>
            <person name="Yen H.S."/>
            <person name="Zheng N."/>
        </authorList>
    </citation>
    <scope>X-RAY CRYSTALLOGRAPHY (2.17 ANGSTROMS) OF 1-362 IN COMPLEX WITH SELENOK; SELENOS OR USP1</scope>
    <scope>FUNCTION</scope>
    <scope>PATHWAY</scope>
    <scope>IDENTIFICATION IN A CRL2 E3 UBIQUITIN-PROTEIN LIGASE COMPLEX</scope>
    <scope>MUTAGENESIS OF LYS-147; ARG-189; ARG-236; ARG-241 AND SER-269</scope>
</reference>
<reference evidence="18 19 20" key="14">
    <citation type="journal article" date="2023" name="Mol. Cell">
        <title>E3 ligase autoinhibition by C-degron mimicry maintains C-degron substrate fidelity.</title>
        <authorList>
            <person name="Scott D.C."/>
            <person name="King M.T."/>
            <person name="Baek K."/>
            <person name="Gee C.T."/>
            <person name="Kalathur R."/>
            <person name="Li J."/>
            <person name="Purser N."/>
            <person name="Nourse A."/>
            <person name="Chai S.C."/>
            <person name="Vaithiyalingam S."/>
            <person name="Chen T."/>
            <person name="Lee R.E."/>
            <person name="Elledge S.J."/>
            <person name="Kleiger G."/>
            <person name="Schulman B.A."/>
        </authorList>
    </citation>
    <scope>X-RAY CRYSTALLOGRAPHY (1.37 ANGSTROMS) ALONE AND IN COMPLEX WITH ELOB; ELOC AND EPHB2 C-DEGRON</scope>
    <scope>FUNCTION</scope>
    <scope>PATHWAY</scope>
    <scope>INTERACTION WITH ELOB AND ELOC</scope>
    <scope>AUTOUBIQUITINATION</scope>
    <scope>KELCH REPEATS</scope>
    <scope>MUTAGENESIS OF PHE-177; PHE-182; TRP-183; SER-269; ILE-373; 401-ASN--SER-406; 405-GLY-SER-406 AND SER-406</scope>
</reference>
<reference evidence="21 22 23" key="15">
    <citation type="journal article" date="2024" name="Nat. Struct. Mol. Biol.">
        <title>Co-opting the E3 ligase KLHDC2 for targeted protein degradation by small molecules.</title>
        <authorList>
            <person name="Hickey C.M."/>
            <person name="Digianantonio K.M."/>
            <person name="Zimmermann K."/>
            <person name="Harbin A."/>
            <person name="Quinn C."/>
            <person name="Patel A."/>
            <person name="Gareiss P."/>
            <person name="Chapman A."/>
            <person name="Tiberi B."/>
            <person name="Dobrodziej J."/>
            <person name="Corradi J."/>
            <person name="Cacace A.M."/>
            <person name="Langley D.R."/>
            <person name="Bekes M."/>
        </authorList>
    </citation>
    <scope>X-RAY CRYSTALLOGRAPHY (1.42 ANGSTROMS) OF 2-406 ALONE AND IN COMPLEX WITH ELOB AND ELOC</scope>
    <scope>FUNCTION</scope>
    <scope>PATHWAY</scope>
    <scope>INTERACTION WITH ELOB AND ELOC</scope>
    <scope>KELCH REPEATS</scope>
</reference>
<feature type="chain" id="PRO_0000119127" description="Kelch domain-containing protein 2">
    <location>
        <begin position="1"/>
        <end position="406"/>
    </location>
</feature>
<feature type="repeat" description="Kelch 1" evidence="7 8 18 21 22 23">
    <location>
        <begin position="31"/>
        <end position="85"/>
    </location>
</feature>
<feature type="repeat" description="Kelch 2" evidence="7 8 18 21 22 23">
    <location>
        <begin position="92"/>
        <end position="136"/>
    </location>
</feature>
<feature type="repeat" description="Kelch 3" evidence="7 8 18 21 22 23">
    <location>
        <begin position="148"/>
        <end position="207"/>
    </location>
</feature>
<feature type="repeat" description="Kelch 4" evidence="7 8 18 21 22 23">
    <location>
        <begin position="221"/>
        <end position="259"/>
    </location>
</feature>
<feature type="repeat" description="Kelch 5" evidence="7 8 18 21 22 23">
    <location>
        <begin position="271"/>
        <end position="311"/>
    </location>
</feature>
<feature type="repeat" description="Kelch 6" evidence="7 8 18 21 22 23">
    <location>
        <begin position="322"/>
        <end position="359"/>
    </location>
</feature>
<feature type="splice variant" id="VSP_030165" description="In isoform 2." evidence="12">
    <original>DARMNDLHYLN</original>
    <variation>VSIQTTSMTCF</variation>
    <location>
        <begin position="239"/>
        <end position="249"/>
    </location>
</feature>
<feature type="splice variant" id="VSP_030166" description="In isoform 2." evidence="12">
    <location>
        <begin position="250"/>
        <end position="406"/>
    </location>
</feature>
<feature type="mutagenesis site" description="Strongly impaired ability to recognize truncated SELENOK or cleaved USP1 with a diglycine (Gly-Gly) at the C-terminus." evidence="6">
    <original>K</original>
    <variation>A</variation>
    <location>
        <position position="147"/>
    </location>
</feature>
<feature type="mutagenesis site" description="Impairs oligomerization of KLHDC2-ELOB-ELOC complex; when associated with A-182 and A-183. Impairs oligomerization of KLHDC2-ELOB-ELOC complex; when associated with K-182 and A-183." evidence="7">
    <original>F</original>
    <variation>A</variation>
    <location>
        <position position="177"/>
    </location>
</feature>
<feature type="mutagenesis site" description="Impairs oligomerization of KLHDC2-ELOB-ELOC complex; when associated with A-177 and A-183." evidence="7">
    <original>F</original>
    <variation>A</variation>
    <location>
        <position position="182"/>
    </location>
</feature>
<feature type="mutagenesis site" description="Impairs oligomerization of KLHDC2-ELOB-ELOC complex; when associated with A-177 and A-183." evidence="7">
    <original>F</original>
    <variation>K</variation>
    <location>
        <position position="182"/>
    </location>
</feature>
<feature type="mutagenesis site" description="Impairs oligomerization of KLHDC2-ELOB-ELOC complex; when associated with A-177 and A-182. Impairs oligomerization of KLHDC2-ELOB-ELOC complex; when associated with A-177 and K-182." evidence="7">
    <original>W</original>
    <variation>A</variation>
    <location>
        <position position="183"/>
    </location>
</feature>
<feature type="mutagenesis site" description="Does not affect ability to recognize truncated SELENOK or cleaved USP1 with a diglycine (Gly-Gly) at the C-terminus." evidence="6">
    <original>R</original>
    <variation>A</variation>
    <location>
        <position position="189"/>
    </location>
</feature>
<feature type="mutagenesis site" description="Does not affect ability to recognize truncated SELENOK with a diglycine (Gly-Gly) at the C-terminus. Abolished ability to recognize cleaved USP1 with a diglycine (Gly-Gly) at the C-terminus." evidence="6">
    <original>R</original>
    <variation>A</variation>
    <location>
        <position position="236"/>
    </location>
</feature>
<feature type="mutagenesis site" description="Abolished ability to recognize truncated SELENOK with a diglycine (Gly-Gly) at the C-terminus." evidence="6">
    <original>R</original>
    <variation>E</variation>
    <location>
        <position position="236"/>
    </location>
</feature>
<feature type="mutagenesis site" description="Abolished ability to recognize truncated SELENOK or cleaved USP1 with a diglycine (Gly-Gly) at the C-terminus." evidence="6">
    <original>R</original>
    <variation>A</variation>
    <variation>L</variation>
    <variation>E</variation>
    <location>
        <position position="241"/>
    </location>
</feature>
<feature type="mutagenesis site" description="Does not affect ability to recognize truncated SELENOK with a diglycine (Gly-Gly) at the C-terminus. Abolished ability to recognize cleaved USP1 with a diglycine (Gly-Gly) at the C-terminus." evidence="6">
    <original>R</original>
    <variation>K</variation>
    <location>
        <position position="241"/>
    </location>
</feature>
<feature type="mutagenesis site" description="Does not affect ability to recognize truncated SELENOK with a diglycine (Gly-Gly) at the C-terminus." evidence="6">
    <original>S</original>
    <variation>A</variation>
    <location>
        <position position="269"/>
    </location>
</feature>
<feature type="mutagenesis site" description="Abolished ability to recognize truncated SELENOK with a diglycine (Gly-Gly) at the C-terminus." evidence="6">
    <original>S</original>
    <variation>E</variation>
    <variation>L</variation>
    <location>
        <position position="269"/>
    </location>
</feature>
<feature type="mutagenesis site" description="Abolishes oligomerization of KLHDC2-ELOB-ELOC complex." evidence="7">
    <original>S</original>
    <variation>E</variation>
    <location>
        <position position="269"/>
    </location>
</feature>
<feature type="mutagenesis site" description="Impairs oligomerization of KLHDC2-ELOB-ELOC complex." evidence="7">
    <original>I</original>
    <variation>R</variation>
    <location>
        <position position="373"/>
    </location>
</feature>
<feature type="mutagenesis site" description="Abolishes oligomerization of KLHDC2-ELOB-ELOC complex." evidence="7">
    <location>
        <begin position="401"/>
        <end position="406"/>
    </location>
</feature>
<feature type="mutagenesis site" description="Abolishes oligomerization of KLHDC2-ELOB-ELOC complex." evidence="7">
    <original>GS</original>
    <variation>KK</variation>
    <location>
        <begin position="405"/>
        <end position="406"/>
    </location>
</feature>
<feature type="mutagenesis site" description="Promotes oligomerization of KLHDC2-ELOB-ELOC complex. Abolishes the activity of CRL2(KLHDC2) complex to ubiquitinate SELENOK." evidence="7">
    <original>S</original>
    <variation>G</variation>
    <location>
        <position position="406"/>
    </location>
</feature>
<feature type="sequence conflict" description="In Ref. 5; CAG33486." evidence="13" ref="5">
    <original>E</original>
    <variation>D</variation>
    <location>
        <position position="25"/>
    </location>
</feature>
<feature type="strand" evidence="25">
    <location>
        <begin position="36"/>
        <end position="39"/>
    </location>
</feature>
<feature type="strand" evidence="25">
    <location>
        <begin position="41"/>
        <end position="47"/>
    </location>
</feature>
<feature type="strand" evidence="25">
    <location>
        <begin position="50"/>
        <end position="53"/>
    </location>
</feature>
<feature type="turn" evidence="25">
    <location>
        <begin position="54"/>
        <end position="57"/>
    </location>
</feature>
<feature type="strand" evidence="25">
    <location>
        <begin position="58"/>
        <end position="62"/>
    </location>
</feature>
<feature type="strand" evidence="25">
    <location>
        <begin position="67"/>
        <end position="72"/>
    </location>
</feature>
<feature type="turn" evidence="25">
    <location>
        <begin position="73"/>
        <end position="75"/>
    </location>
</feature>
<feature type="strand" evidence="25">
    <location>
        <begin position="78"/>
        <end position="82"/>
    </location>
</feature>
<feature type="strand" evidence="25">
    <location>
        <begin position="84"/>
        <end position="86"/>
    </location>
</feature>
<feature type="strand" evidence="25">
    <location>
        <begin position="95"/>
        <end position="99"/>
    </location>
</feature>
<feature type="strand" evidence="25">
    <location>
        <begin position="102"/>
        <end position="106"/>
    </location>
</feature>
<feature type="strand" evidence="24">
    <location>
        <begin position="113"/>
        <end position="115"/>
    </location>
</feature>
<feature type="strand" evidence="25">
    <location>
        <begin position="118"/>
        <end position="122"/>
    </location>
</feature>
<feature type="strand" evidence="25">
    <location>
        <begin position="127"/>
        <end position="129"/>
    </location>
</feature>
<feature type="strand" evidence="25">
    <location>
        <begin position="131"/>
        <end position="135"/>
    </location>
</feature>
<feature type="strand" evidence="25">
    <location>
        <begin position="144"/>
        <end position="147"/>
    </location>
</feature>
<feature type="strand" evidence="25">
    <location>
        <begin position="149"/>
        <end position="153"/>
    </location>
</feature>
<feature type="strand" evidence="25">
    <location>
        <begin position="156"/>
        <end position="160"/>
    </location>
</feature>
<feature type="strand" evidence="25">
    <location>
        <begin position="163"/>
        <end position="165"/>
    </location>
</feature>
<feature type="strand" evidence="26">
    <location>
        <begin position="171"/>
        <end position="173"/>
    </location>
</feature>
<feature type="strand" evidence="25">
    <location>
        <begin position="175"/>
        <end position="177"/>
    </location>
</feature>
<feature type="helix" evidence="25">
    <location>
        <begin position="181"/>
        <end position="184"/>
    </location>
</feature>
<feature type="strand" evidence="25">
    <location>
        <begin position="185"/>
        <end position="187"/>
    </location>
</feature>
<feature type="strand" evidence="25">
    <location>
        <begin position="190"/>
        <end position="192"/>
    </location>
</feature>
<feature type="strand" evidence="25">
    <location>
        <begin position="195"/>
        <end position="199"/>
    </location>
</feature>
<feature type="turn" evidence="25">
    <location>
        <begin position="200"/>
        <end position="203"/>
    </location>
</feature>
<feature type="strand" evidence="25">
    <location>
        <begin position="204"/>
        <end position="206"/>
    </location>
</feature>
<feature type="strand" evidence="25">
    <location>
        <begin position="218"/>
        <end position="220"/>
    </location>
</feature>
<feature type="strand" evidence="25">
    <location>
        <begin position="222"/>
        <end position="226"/>
    </location>
</feature>
<feature type="strand" evidence="25">
    <location>
        <begin position="229"/>
        <end position="237"/>
    </location>
</feature>
<feature type="strand" evidence="25">
    <location>
        <begin position="240"/>
        <end position="249"/>
    </location>
</feature>
<feature type="turn" evidence="25">
    <location>
        <begin position="250"/>
        <end position="252"/>
    </location>
</feature>
<feature type="strand" evidence="25">
    <location>
        <begin position="254"/>
        <end position="258"/>
    </location>
</feature>
<feature type="strand" evidence="27">
    <location>
        <begin position="268"/>
        <end position="270"/>
    </location>
</feature>
<feature type="strand" evidence="25">
    <location>
        <begin position="272"/>
        <end position="277"/>
    </location>
</feature>
<feature type="strand" evidence="25">
    <location>
        <begin position="280"/>
        <end position="284"/>
    </location>
</feature>
<feature type="strand" evidence="25">
    <location>
        <begin position="297"/>
        <end position="301"/>
    </location>
</feature>
<feature type="turn" evidence="25">
    <location>
        <begin position="302"/>
        <end position="305"/>
    </location>
</feature>
<feature type="strand" evidence="25">
    <location>
        <begin position="306"/>
        <end position="310"/>
    </location>
</feature>
<feature type="turn" evidence="28">
    <location>
        <begin position="313"/>
        <end position="316"/>
    </location>
</feature>
<feature type="strand" evidence="25">
    <location>
        <begin position="323"/>
        <end position="326"/>
    </location>
</feature>
<feature type="strand" evidence="25">
    <location>
        <begin position="330"/>
        <end position="335"/>
    </location>
</feature>
<feature type="strand" evidence="25">
    <location>
        <begin position="338"/>
        <end position="340"/>
    </location>
</feature>
<feature type="helix" evidence="25">
    <location>
        <begin position="345"/>
        <end position="347"/>
    </location>
</feature>
<feature type="strand" evidence="25">
    <location>
        <begin position="354"/>
        <end position="358"/>
    </location>
</feature>
<feature type="helix" evidence="27">
    <location>
        <begin position="364"/>
        <end position="374"/>
    </location>
</feature>
<feature type="helix" evidence="27">
    <location>
        <begin position="388"/>
        <end position="391"/>
    </location>
</feature>
<feature type="helix" evidence="27">
    <location>
        <begin position="393"/>
        <end position="396"/>
    </location>
</feature>
<feature type="turn" evidence="29">
    <location>
        <begin position="402"/>
        <end position="405"/>
    </location>
</feature>
<gene>
    <name evidence="11 14" type="primary">KLHDC2</name>
    <name evidence="10" type="synonym">HCA33</name>
</gene>
<comment type="function">
    <text evidence="1 3 4 5 6 7 8">Substrate-recognition component of a Cul2-RING (CRL2) E3 ubiquitin-protein ligase complex of the DesCEND (destruction via C-end degrons) pathway, which recognizes a C-degron located at the extreme C terminus of target proteins, leading to their ubiquitination and degradation (PubMed:29775578, PubMed:29779948, PubMed:30526872, PubMed:36805027, PubMed:38177675). The C-degron recognized by the DesCEND pathway is usually a motif of less than ten residues and can be present in full-length proteins, truncated proteins or proteolytically cleaved forms (PubMed:29775578, PubMed:29779948, PubMed:30526872). The CRL2(KLHDC2) complex specifically recognizes proteins with a diglycine (Gly-Gly) at the C-terminus, leading to their ubiquitination and degradation (PubMed:29775578, PubMed:29779948, PubMed:30526872, PubMed:36805027, PubMed:38177675). The CRL2(KLHDC2) complex mediates ubiquitination and degradation of truncated SELENOK and SELENOS selenoproteins produced by failed UGA/Sec decoding, which end with a diglycine (PubMed:26138980, PubMed:30526872, PubMed:36805027). The CRL2(KLHDC2) complex also recognizes proteolytically cleaved proteins ending with Gly-Gly, such as the N-terminal fragment of USP1, leading to their degradation (PubMed:29775578, PubMed:30526872, PubMed:36805027, PubMed:38177675). May also act as an indirect repressor of CREB3-mediated transcription by interfering with CREB3-DNA-binding (PubMed:11384994).</text>
</comment>
<comment type="pathway">
    <text evidence="4 5 6 7 8">Protein modification; protein ubiquitination.</text>
</comment>
<comment type="subunit">
    <text evidence="1 4 5 6 7 8">Component of a CRL2(KLHDC2) E3 ubiquitin-protein ligase complex, also named ECS(KLHDC2) complex, composed of CUL2, Elongin BC (ELOB and ELOC), RBX1 and substrate-specific adapter KLHDC2 (PubMed:29775578, PubMed:29779948, PubMed:30526872, PubMed:36805027, PubMed:38177675). May form oligomers as a KLHDC2-ELOB-ELOC complex; this interaction is autoinhibitory for the E3 ligase complex as the substrate-binding site of KLHDC2 is blocked in the oligomer (PubMed:36805027, PubMed:38177675). Interacts with CREB3; interaction is direct and specific as it does not interact with CREB1, ATF4, ATF6, JUN, FOS, CEBPA or herpes simplex virus transactivator VP16 (PubMed:11384994).</text>
</comment>
<comment type="interaction">
    <interactant intactId="EBI-715326">
        <id>Q9Y2U9</id>
    </interactant>
    <interactant intactId="EBI-744342">
        <id>Q8IVD9</id>
        <label>NUDCD3</label>
    </interactant>
    <organismsDiffer>false</organismsDiffer>
    <experiments>3</experiments>
</comment>
<comment type="subcellular location">
    <subcellularLocation>
        <location evidence="1 2">Nucleus</location>
    </subcellularLocation>
</comment>
<comment type="alternative products">
    <event type="alternative splicing"/>
    <isoform>
        <id>Q9Y2U9-1</id>
        <name>1</name>
        <sequence type="displayed"/>
    </isoform>
    <isoform>
        <id>Q9Y2U9-2</id>
        <name>2</name>
        <sequence type="described" ref="VSP_030165 VSP_030166"/>
    </isoform>
</comment>
<comment type="tissue specificity">
    <text evidence="1 2">Widely expressed, with high levels in skeletal muscle, heart, pancreas and liver (PubMed:11384994, PubMed:16964437). Undetectable in peripheral blood leukocytes (PubMed:16964437).</text>
</comment>
<comment type="PTM">
    <text evidence="7">Autoubiquitinated by the CRL2(KLHDC2) E3 ligase complex.</text>
</comment>
<dbReference type="EMBL" id="AF113131">
    <property type="protein sequence ID" value="AAD21038.1"/>
    <property type="molecule type" value="mRNA"/>
</dbReference>
<dbReference type="EMBL" id="AF244137">
    <property type="protein sequence ID" value="AAF66246.1"/>
    <property type="molecule type" value="mRNA"/>
</dbReference>
<dbReference type="EMBL" id="BX161429">
    <property type="protein sequence ID" value="CAD61901.1"/>
    <property type="molecule type" value="mRNA"/>
</dbReference>
<dbReference type="EMBL" id="AK001771">
    <property type="protein sequence ID" value="BAA91898.1"/>
    <property type="molecule type" value="mRNA"/>
</dbReference>
<dbReference type="EMBL" id="AK056298">
    <property type="protein sequence ID" value="BAG51671.1"/>
    <property type="molecule type" value="mRNA"/>
</dbReference>
<dbReference type="EMBL" id="CR457205">
    <property type="protein sequence ID" value="CAG33486.1"/>
    <property type="molecule type" value="mRNA"/>
</dbReference>
<dbReference type="EMBL" id="CH471078">
    <property type="protein sequence ID" value="EAW65749.1"/>
    <property type="molecule type" value="Genomic_DNA"/>
</dbReference>
<dbReference type="EMBL" id="CH471078">
    <property type="protein sequence ID" value="EAW65750.1"/>
    <property type="molecule type" value="Genomic_DNA"/>
</dbReference>
<dbReference type="EMBL" id="BC002335">
    <property type="protein sequence ID" value="AAH02335.1"/>
    <property type="molecule type" value="mRNA"/>
</dbReference>
<dbReference type="EMBL" id="BC024192">
    <property type="protein sequence ID" value="AAH24192.1"/>
    <property type="molecule type" value="mRNA"/>
</dbReference>
<dbReference type="CCDS" id="CCDS9693.1">
    <molecule id="Q9Y2U9-1"/>
</dbReference>
<dbReference type="RefSeq" id="NP_055130.1">
    <molecule id="Q9Y2U9-1"/>
    <property type="nucleotide sequence ID" value="NM_014315.3"/>
</dbReference>
<dbReference type="PDB" id="6DO3">
    <property type="method" value="X-ray"/>
    <property type="resolution" value="2.17 A"/>
    <property type="chains" value="A/B=1-362"/>
</dbReference>
<dbReference type="PDB" id="6DO4">
    <property type="method" value="X-ray"/>
    <property type="resolution" value="2.20 A"/>
    <property type="chains" value="A/B=1-362"/>
</dbReference>
<dbReference type="PDB" id="6DO5">
    <property type="method" value="X-ray"/>
    <property type="resolution" value="2.50 A"/>
    <property type="chains" value="A/B=1-362"/>
</dbReference>
<dbReference type="PDB" id="8EBL">
    <property type="method" value="X-ray"/>
    <property type="resolution" value="1.37 A"/>
    <property type="chains" value="A/B=15-361"/>
</dbReference>
<dbReference type="PDB" id="8EBM">
    <property type="method" value="X-ray"/>
    <property type="resolution" value="1.58 A"/>
    <property type="chains" value="A/B=15-361"/>
</dbReference>
<dbReference type="PDB" id="8EBN">
    <property type="method" value="X-ray"/>
    <property type="resolution" value="2.60 A"/>
    <property type="chains" value="A/B=1-406"/>
</dbReference>
<dbReference type="PDB" id="8PIF">
    <property type="method" value="X-ray"/>
    <property type="resolution" value="1.78 A"/>
    <property type="chains" value="A/B=1-362"/>
</dbReference>
<dbReference type="PDB" id="8SGE">
    <property type="method" value="X-ray"/>
    <property type="resolution" value="1.51 A"/>
    <property type="chains" value="A/B=2-362"/>
</dbReference>
<dbReference type="PDB" id="8SGF">
    <property type="method" value="X-ray"/>
    <property type="resolution" value="1.42 A"/>
    <property type="chains" value="A/B=2-362"/>
</dbReference>
<dbReference type="PDB" id="8SH2">
    <property type="method" value="EM"/>
    <property type="resolution" value="3.74 A"/>
    <property type="chains" value="A/B/C/D=2-406"/>
</dbReference>
<dbReference type="PDB" id="8UXS">
    <property type="method" value="X-ray"/>
    <property type="resolution" value="2.00 A"/>
    <property type="chains" value="A/B=22-362"/>
</dbReference>
<dbReference type="PDB" id="9BC9">
    <property type="method" value="X-ray"/>
    <property type="resolution" value="1.91 A"/>
    <property type="chains" value="A/B=16-361"/>
</dbReference>
<dbReference type="PDB" id="9BCA">
    <property type="method" value="X-ray"/>
    <property type="resolution" value="1.70 A"/>
    <property type="chains" value="A/B=15-361"/>
</dbReference>
<dbReference type="PDB" id="9BCC">
    <property type="method" value="X-ray"/>
    <property type="resolution" value="1.70 A"/>
    <property type="chains" value="A/B=15-361"/>
</dbReference>
<dbReference type="PDBsum" id="6DO3"/>
<dbReference type="PDBsum" id="6DO4"/>
<dbReference type="PDBsum" id="6DO5"/>
<dbReference type="PDBsum" id="8EBL"/>
<dbReference type="PDBsum" id="8EBM"/>
<dbReference type="PDBsum" id="8EBN"/>
<dbReference type="PDBsum" id="8PIF"/>
<dbReference type="PDBsum" id="8SGE"/>
<dbReference type="PDBsum" id="8SGF"/>
<dbReference type="PDBsum" id="8SH2"/>
<dbReference type="PDBsum" id="8UXS"/>
<dbReference type="PDBsum" id="9BC9"/>
<dbReference type="PDBsum" id="9BCA"/>
<dbReference type="PDBsum" id="9BCC"/>
<dbReference type="EMDB" id="EMD-40477"/>
<dbReference type="SMR" id="Q9Y2U9"/>
<dbReference type="BioGRID" id="117123">
    <property type="interactions" value="83"/>
</dbReference>
<dbReference type="ComplexPortal" id="CPX-2226">
    <property type="entry name" value="KLHDC2-Elongin C-Elongin B E3 ubiquitin ligase complex"/>
</dbReference>
<dbReference type="FunCoup" id="Q9Y2U9">
    <property type="interactions" value="2060"/>
</dbReference>
<dbReference type="IntAct" id="Q9Y2U9">
    <property type="interactions" value="71"/>
</dbReference>
<dbReference type="MINT" id="Q9Y2U9"/>
<dbReference type="STRING" id="9606.ENSP00000298307"/>
<dbReference type="GuidetoPHARMACOLOGY" id="3262"/>
<dbReference type="iPTMnet" id="Q9Y2U9"/>
<dbReference type="PhosphoSitePlus" id="Q9Y2U9"/>
<dbReference type="BioMuta" id="KLHDC2"/>
<dbReference type="DMDM" id="28380093"/>
<dbReference type="jPOST" id="Q9Y2U9"/>
<dbReference type="MassIVE" id="Q9Y2U9"/>
<dbReference type="PaxDb" id="9606-ENSP00000298307"/>
<dbReference type="PeptideAtlas" id="Q9Y2U9"/>
<dbReference type="ProteomicsDB" id="85905">
    <molecule id="Q9Y2U9-1"/>
</dbReference>
<dbReference type="ProteomicsDB" id="85906">
    <molecule id="Q9Y2U9-2"/>
</dbReference>
<dbReference type="Pumba" id="Q9Y2U9"/>
<dbReference type="Antibodypedia" id="23574">
    <property type="antibodies" value="88 antibodies from 19 providers"/>
</dbReference>
<dbReference type="DNASU" id="23588"/>
<dbReference type="Ensembl" id="ENST00000298307.10">
    <molecule id="Q9Y2U9-1"/>
    <property type="protein sequence ID" value="ENSP00000298307.5"/>
    <property type="gene ID" value="ENSG00000165516.11"/>
</dbReference>
<dbReference type="Ensembl" id="ENST00000555443.5">
    <molecule id="Q9Y2U9-2"/>
    <property type="protein sequence ID" value="ENSP00000450944.1"/>
    <property type="gene ID" value="ENSG00000165516.11"/>
</dbReference>
<dbReference type="Ensembl" id="ENST00000555739.5">
    <molecule id="Q9Y2U9-2"/>
    <property type="protein sequence ID" value="ENSP00000450539.1"/>
    <property type="gene ID" value="ENSG00000165516.11"/>
</dbReference>
<dbReference type="GeneID" id="23588"/>
<dbReference type="KEGG" id="hsa:23588"/>
<dbReference type="MANE-Select" id="ENST00000298307.10">
    <property type="protein sequence ID" value="ENSP00000298307.5"/>
    <property type="RefSeq nucleotide sequence ID" value="NM_014315.3"/>
    <property type="RefSeq protein sequence ID" value="NP_055130.1"/>
</dbReference>
<dbReference type="UCSC" id="uc001wwx.4">
    <molecule id="Q9Y2U9-1"/>
    <property type="organism name" value="human"/>
</dbReference>
<dbReference type="AGR" id="HGNC:20231"/>
<dbReference type="CTD" id="23588"/>
<dbReference type="DisGeNET" id="23588"/>
<dbReference type="GeneCards" id="KLHDC2"/>
<dbReference type="HGNC" id="HGNC:20231">
    <property type="gene designation" value="KLHDC2"/>
</dbReference>
<dbReference type="HPA" id="ENSG00000165516">
    <property type="expression patterns" value="Low tissue specificity"/>
</dbReference>
<dbReference type="MIM" id="611280">
    <property type="type" value="gene"/>
</dbReference>
<dbReference type="neXtProt" id="NX_Q9Y2U9"/>
<dbReference type="OpenTargets" id="ENSG00000165516"/>
<dbReference type="PharmGKB" id="PA134924955"/>
<dbReference type="VEuPathDB" id="HostDB:ENSG00000165516"/>
<dbReference type="eggNOG" id="KOG0379">
    <property type="taxonomic scope" value="Eukaryota"/>
</dbReference>
<dbReference type="GeneTree" id="ENSGT00940000157150"/>
<dbReference type="HOGENOM" id="CLU_1151487_0_0_1"/>
<dbReference type="InParanoid" id="Q9Y2U9"/>
<dbReference type="OMA" id="MGKLLQF"/>
<dbReference type="OrthoDB" id="10251809at2759"/>
<dbReference type="PAN-GO" id="Q9Y2U9">
    <property type="GO annotations" value="0 GO annotations based on evolutionary models"/>
</dbReference>
<dbReference type="PhylomeDB" id="Q9Y2U9"/>
<dbReference type="TreeFam" id="TF314081"/>
<dbReference type="PathwayCommons" id="Q9Y2U9"/>
<dbReference type="SignaLink" id="Q9Y2U9"/>
<dbReference type="UniPathway" id="UPA00143"/>
<dbReference type="BioGRID-ORCS" id="23588">
    <property type="hits" value="12 hits in 1162 CRISPR screens"/>
</dbReference>
<dbReference type="ChiTaRS" id="KLHDC2">
    <property type="organism name" value="human"/>
</dbReference>
<dbReference type="GenomeRNAi" id="23588"/>
<dbReference type="Pharos" id="Q9Y2U9">
    <property type="development level" value="Tbio"/>
</dbReference>
<dbReference type="PRO" id="PR:Q9Y2U9"/>
<dbReference type="Proteomes" id="UP000005640">
    <property type="component" value="Chromosome 14"/>
</dbReference>
<dbReference type="RNAct" id="Q9Y2U9">
    <property type="molecule type" value="protein"/>
</dbReference>
<dbReference type="Bgee" id="ENSG00000165516">
    <property type="expression patterns" value="Expressed in parotid gland and 215 other cell types or tissues"/>
</dbReference>
<dbReference type="ExpressionAtlas" id="Q9Y2U9">
    <property type="expression patterns" value="baseline and differential"/>
</dbReference>
<dbReference type="GO" id="GO:0031462">
    <property type="term" value="C:Cul2-RING ubiquitin ligase complex"/>
    <property type="evidence" value="ECO:0000314"/>
    <property type="project" value="UniProtKB"/>
</dbReference>
<dbReference type="GO" id="GO:0016604">
    <property type="term" value="C:nuclear body"/>
    <property type="evidence" value="ECO:0000314"/>
    <property type="project" value="HPA"/>
</dbReference>
<dbReference type="GO" id="GO:0031965">
    <property type="term" value="C:nuclear membrane"/>
    <property type="evidence" value="ECO:0000314"/>
    <property type="project" value="HPA"/>
</dbReference>
<dbReference type="GO" id="GO:0005654">
    <property type="term" value="C:nucleoplasm"/>
    <property type="evidence" value="ECO:0000314"/>
    <property type="project" value="HPA"/>
</dbReference>
<dbReference type="GO" id="GO:0005634">
    <property type="term" value="C:nucleus"/>
    <property type="evidence" value="ECO:0000314"/>
    <property type="project" value="UniProtKB"/>
</dbReference>
<dbReference type="GO" id="GO:1990756">
    <property type="term" value="F:ubiquitin-like ligase-substrate adaptor activity"/>
    <property type="evidence" value="ECO:0000314"/>
    <property type="project" value="UniProtKB"/>
</dbReference>
<dbReference type="GO" id="GO:0043161">
    <property type="term" value="P:proteasome-mediated ubiquitin-dependent protein catabolic process"/>
    <property type="evidence" value="ECO:0000314"/>
    <property type="project" value="UniProtKB"/>
</dbReference>
<dbReference type="GO" id="GO:0016567">
    <property type="term" value="P:protein ubiquitination"/>
    <property type="evidence" value="ECO:0007669"/>
    <property type="project" value="UniProtKB-UniPathway"/>
</dbReference>
<dbReference type="GO" id="GO:0140627">
    <property type="term" value="P:ubiquitin-dependent protein catabolic process via the C-end degron rule pathway"/>
    <property type="evidence" value="ECO:0000314"/>
    <property type="project" value="UniProtKB"/>
</dbReference>
<dbReference type="FunFam" id="2.120.10.80:FF:000012">
    <property type="entry name" value="Kelch domain-containing protein 2"/>
    <property type="match status" value="1"/>
</dbReference>
<dbReference type="FunFam" id="2.120.10.80:FF:000043">
    <property type="entry name" value="Kelch domain-containing protein 2"/>
    <property type="match status" value="1"/>
</dbReference>
<dbReference type="Gene3D" id="2.120.10.80">
    <property type="entry name" value="Kelch-type beta propeller"/>
    <property type="match status" value="2"/>
</dbReference>
<dbReference type="InterPro" id="IPR015915">
    <property type="entry name" value="Kelch-typ_b-propeller"/>
</dbReference>
<dbReference type="PANTHER" id="PTHR46228">
    <property type="entry name" value="KELCH DOMAIN-CONTAINING PROTEIN"/>
    <property type="match status" value="1"/>
</dbReference>
<dbReference type="PANTHER" id="PTHR46228:SF3">
    <property type="entry name" value="KELCH DOMAIN-CONTAINING PROTEIN 2"/>
    <property type="match status" value="1"/>
</dbReference>
<dbReference type="Pfam" id="PF24681">
    <property type="entry name" value="Kelch_KLHDC2_KLHL20_DRC7"/>
    <property type="match status" value="1"/>
</dbReference>
<dbReference type="SUPFAM" id="SSF117281">
    <property type="entry name" value="Kelch motif"/>
    <property type="match status" value="2"/>
</dbReference>
<evidence type="ECO:0000269" key="1">
    <source>
    </source>
</evidence>
<evidence type="ECO:0000269" key="2">
    <source>
    </source>
</evidence>
<evidence type="ECO:0000269" key="3">
    <source>
    </source>
</evidence>
<evidence type="ECO:0000269" key="4">
    <source>
    </source>
</evidence>
<evidence type="ECO:0000269" key="5">
    <source>
    </source>
</evidence>
<evidence type="ECO:0000269" key="6">
    <source>
    </source>
</evidence>
<evidence type="ECO:0000269" key="7">
    <source>
    </source>
</evidence>
<evidence type="ECO:0000269" key="8">
    <source>
    </source>
</evidence>
<evidence type="ECO:0000303" key="9">
    <source>
    </source>
</evidence>
<evidence type="ECO:0000303" key="10">
    <source>
    </source>
</evidence>
<evidence type="ECO:0000303" key="11">
    <source>
    </source>
</evidence>
<evidence type="ECO:0000303" key="12">
    <source ref="3"/>
</evidence>
<evidence type="ECO:0000305" key="13"/>
<evidence type="ECO:0000312" key="14">
    <source>
        <dbReference type="HGNC" id="HGNC:20231"/>
    </source>
</evidence>
<evidence type="ECO:0007744" key="15">
    <source>
        <dbReference type="PDB" id="6DO3"/>
    </source>
</evidence>
<evidence type="ECO:0007744" key="16">
    <source>
        <dbReference type="PDB" id="6DO4"/>
    </source>
</evidence>
<evidence type="ECO:0007744" key="17">
    <source>
        <dbReference type="PDB" id="6DO5"/>
    </source>
</evidence>
<evidence type="ECO:0007744" key="18">
    <source>
        <dbReference type="PDB" id="8EBL"/>
    </source>
</evidence>
<evidence type="ECO:0007744" key="19">
    <source>
        <dbReference type="PDB" id="8EBM"/>
    </source>
</evidence>
<evidence type="ECO:0007744" key="20">
    <source>
        <dbReference type="PDB" id="8EBN"/>
    </source>
</evidence>
<evidence type="ECO:0007744" key="21">
    <source>
        <dbReference type="PDB" id="8SGE"/>
    </source>
</evidence>
<evidence type="ECO:0007744" key="22">
    <source>
        <dbReference type="PDB" id="8SGF"/>
    </source>
</evidence>
<evidence type="ECO:0007744" key="23">
    <source>
        <dbReference type="PDB" id="8SH2"/>
    </source>
</evidence>
<evidence type="ECO:0007829" key="24">
    <source>
        <dbReference type="PDB" id="6DO3"/>
    </source>
</evidence>
<evidence type="ECO:0007829" key="25">
    <source>
        <dbReference type="PDB" id="8EBL"/>
    </source>
</evidence>
<evidence type="ECO:0007829" key="26">
    <source>
        <dbReference type="PDB" id="8EBM"/>
    </source>
</evidence>
<evidence type="ECO:0007829" key="27">
    <source>
        <dbReference type="PDB" id="8EBN"/>
    </source>
</evidence>
<evidence type="ECO:0007829" key="28">
    <source>
        <dbReference type="PDB" id="8SGE"/>
    </source>
</evidence>
<evidence type="ECO:0007829" key="29">
    <source>
        <dbReference type="PDB" id="8SGF"/>
    </source>
</evidence>